<sequence>MAEVNVEKLAGDIGTTVDKLLQQFSQAGITKQAGESVTEAEKATLLDHLSKQHGGTGSDGPARMTLQRKSKSTLSVTGSTGKAKSVQVEVRKTRTYVKKSAMEQEQEELRLAAEEKLRLEEQQKAAQEAAELKAKQEAERKAKEDADRKAKEEAKRKADAERKAKQKQMTPEQSAKSEKDRIEAERLQKEAEEAALKKAEEEAKRQAEEARKLAEENSARWKKEEEERKKREETSDHHLTTSTYAREAEDVADARDEQGTRRAKKKKKAPAKDKFAASKGRNKGKLKAPTSLQHGFTKPTADVKNEVRISETITVAELASRMAVKGAEVVKTMMKMGDMVTINQVIDQEAAQLVAEEMGHKVIIVKENELEQKVLNDRHEDGKSEPRAPVVTVMGHVDHGKTSTLDYIRSAKVASGEAGGITQHIGAYHVDVNGNMITFLDTPGHAAFTSMRARGAQATDIVILVVAADDGVMPQTKEAVQHARAAGVPLIIAVNKMDKEGVDPDRVKNELAQLDVIPEEWGGDTQYVHISAKTGLGIDELLEAVLNQSELLELTAPTVGMAAGVVIESRLDKGRGPVASILVQSGTLNQGDIVLCGLEYGRIRAMRDENGKDIKSAGPSIPVEILGLSGIPAAGDEATVVKDERKAREVALYRQGKFRDVKLARQQKAKLENMFSHMTEGDVSEVNVVLKADVQGSIEAISDSLTKLSTDEVKVKIVGSGVGGITETDATLAAASNAIVVGFNVRADASARKVIESENLDLRYYSVIYSLIDEVKQAMSGMLAPEFKQEIIGLAQVRDVFKSPKIGAIAGCMVTEGVIKRSAPIRVLRDNVVIYEGELESLRRFKDDVADVRNGMECGIGVKNYNDVRVGDQIEVFETVEIQRTL</sequence>
<protein>
    <recommendedName>
        <fullName evidence="2">Translation initiation factor IF-2</fullName>
    </recommendedName>
</protein>
<reference key="1">
    <citation type="journal article" date="2005" name="Genome Res.">
        <title>Coping with cold: the genome of the versatile marine Antarctica bacterium Pseudoalteromonas haloplanktis TAC125.</title>
        <authorList>
            <person name="Medigue C."/>
            <person name="Krin E."/>
            <person name="Pascal G."/>
            <person name="Barbe V."/>
            <person name="Bernsel A."/>
            <person name="Bertin P.N."/>
            <person name="Cheung F."/>
            <person name="Cruveiller S."/>
            <person name="D'Amico S."/>
            <person name="Duilio A."/>
            <person name="Fang G."/>
            <person name="Feller G."/>
            <person name="Ho C."/>
            <person name="Mangenot S."/>
            <person name="Marino G."/>
            <person name="Nilsson J."/>
            <person name="Parrilli E."/>
            <person name="Rocha E.P.C."/>
            <person name="Rouy Z."/>
            <person name="Sekowska A."/>
            <person name="Tutino M.L."/>
            <person name="Vallenet D."/>
            <person name="von Heijne G."/>
            <person name="Danchin A."/>
        </authorList>
    </citation>
    <scope>NUCLEOTIDE SEQUENCE [LARGE SCALE GENOMIC DNA]</scope>
    <source>
        <strain>TAC 125</strain>
    </source>
</reference>
<name>IF2_PSET1</name>
<proteinExistence type="inferred from homology"/>
<gene>
    <name evidence="2" type="primary">infB</name>
    <name type="ordered locus">PSHAa0997</name>
</gene>
<comment type="function">
    <text evidence="2">One of the essential components for the initiation of protein synthesis. Protects formylmethionyl-tRNA from spontaneous hydrolysis and promotes its binding to the 30S ribosomal subunits. Also involved in the hydrolysis of GTP during the formation of the 70S ribosomal complex.</text>
</comment>
<comment type="subcellular location">
    <subcellularLocation>
        <location evidence="2">Cytoplasm</location>
    </subcellularLocation>
</comment>
<comment type="similarity">
    <text evidence="2">Belongs to the TRAFAC class translation factor GTPase superfamily. Classic translation factor GTPase family. IF-2 subfamily.</text>
</comment>
<dbReference type="EMBL" id="CR954246">
    <property type="protein sequence ID" value="CAI86075.1"/>
    <property type="molecule type" value="Genomic_DNA"/>
</dbReference>
<dbReference type="SMR" id="Q3IJ53"/>
<dbReference type="STRING" id="326442.PSHAa0997"/>
<dbReference type="KEGG" id="pha:PSHAa0997"/>
<dbReference type="PATRIC" id="fig|326442.8.peg.957"/>
<dbReference type="eggNOG" id="COG0532">
    <property type="taxonomic scope" value="Bacteria"/>
</dbReference>
<dbReference type="HOGENOM" id="CLU_006301_6_2_6"/>
<dbReference type="BioCyc" id="PHAL326442:PSHA_RS04870-MONOMER"/>
<dbReference type="Proteomes" id="UP000006843">
    <property type="component" value="Chromosome I"/>
</dbReference>
<dbReference type="GO" id="GO:0005829">
    <property type="term" value="C:cytosol"/>
    <property type="evidence" value="ECO:0007669"/>
    <property type="project" value="TreeGrafter"/>
</dbReference>
<dbReference type="GO" id="GO:0005525">
    <property type="term" value="F:GTP binding"/>
    <property type="evidence" value="ECO:0007669"/>
    <property type="project" value="UniProtKB-KW"/>
</dbReference>
<dbReference type="GO" id="GO:0003924">
    <property type="term" value="F:GTPase activity"/>
    <property type="evidence" value="ECO:0007669"/>
    <property type="project" value="UniProtKB-UniRule"/>
</dbReference>
<dbReference type="GO" id="GO:0097216">
    <property type="term" value="F:guanosine tetraphosphate binding"/>
    <property type="evidence" value="ECO:0007669"/>
    <property type="project" value="UniProtKB-ARBA"/>
</dbReference>
<dbReference type="GO" id="GO:0003743">
    <property type="term" value="F:translation initiation factor activity"/>
    <property type="evidence" value="ECO:0007669"/>
    <property type="project" value="UniProtKB-UniRule"/>
</dbReference>
<dbReference type="CDD" id="cd01887">
    <property type="entry name" value="IF2_eIF5B"/>
    <property type="match status" value="1"/>
</dbReference>
<dbReference type="CDD" id="cd03702">
    <property type="entry name" value="IF2_mtIF2_II"/>
    <property type="match status" value="1"/>
</dbReference>
<dbReference type="CDD" id="cd03692">
    <property type="entry name" value="mtIF2_IVc"/>
    <property type="match status" value="1"/>
</dbReference>
<dbReference type="FunFam" id="2.40.30.10:FF:000007">
    <property type="entry name" value="Translation initiation factor IF-2"/>
    <property type="match status" value="1"/>
</dbReference>
<dbReference type="FunFam" id="2.40.30.10:FF:000008">
    <property type="entry name" value="Translation initiation factor IF-2"/>
    <property type="match status" value="1"/>
</dbReference>
<dbReference type="FunFam" id="3.40.50.10050:FF:000001">
    <property type="entry name" value="Translation initiation factor IF-2"/>
    <property type="match status" value="1"/>
</dbReference>
<dbReference type="FunFam" id="3.40.50.300:FF:000019">
    <property type="entry name" value="Translation initiation factor IF-2"/>
    <property type="match status" value="1"/>
</dbReference>
<dbReference type="Gene3D" id="3.40.50.300">
    <property type="entry name" value="P-loop containing nucleotide triphosphate hydrolases"/>
    <property type="match status" value="1"/>
</dbReference>
<dbReference type="Gene3D" id="3.30.56.50">
    <property type="entry name" value="Putative DNA-binding domain, N-terminal subdomain of bacterial translation initiation factor IF2"/>
    <property type="match status" value="1"/>
</dbReference>
<dbReference type="Gene3D" id="2.40.30.10">
    <property type="entry name" value="Translation factors"/>
    <property type="match status" value="2"/>
</dbReference>
<dbReference type="Gene3D" id="3.40.50.10050">
    <property type="entry name" value="Translation initiation factor IF- 2, domain 3"/>
    <property type="match status" value="1"/>
</dbReference>
<dbReference type="HAMAP" id="MF_00100_B">
    <property type="entry name" value="IF_2_B"/>
    <property type="match status" value="1"/>
</dbReference>
<dbReference type="InterPro" id="IPR009061">
    <property type="entry name" value="DNA-bd_dom_put_sf"/>
</dbReference>
<dbReference type="InterPro" id="IPR053905">
    <property type="entry name" value="EF-G-like_DII"/>
</dbReference>
<dbReference type="InterPro" id="IPR004161">
    <property type="entry name" value="EFTu-like_2"/>
</dbReference>
<dbReference type="InterPro" id="IPR013575">
    <property type="entry name" value="IF2_assoc_dom_bac"/>
</dbReference>
<dbReference type="InterPro" id="IPR044145">
    <property type="entry name" value="IF2_II"/>
</dbReference>
<dbReference type="InterPro" id="IPR006847">
    <property type="entry name" value="IF2_N"/>
</dbReference>
<dbReference type="InterPro" id="IPR027417">
    <property type="entry name" value="P-loop_NTPase"/>
</dbReference>
<dbReference type="InterPro" id="IPR005225">
    <property type="entry name" value="Small_GTP-bd"/>
</dbReference>
<dbReference type="InterPro" id="IPR000795">
    <property type="entry name" value="T_Tr_GTP-bd_dom"/>
</dbReference>
<dbReference type="InterPro" id="IPR000178">
    <property type="entry name" value="TF_IF2_bacterial-like"/>
</dbReference>
<dbReference type="InterPro" id="IPR015760">
    <property type="entry name" value="TIF_IF2"/>
</dbReference>
<dbReference type="InterPro" id="IPR023115">
    <property type="entry name" value="TIF_IF2_dom3"/>
</dbReference>
<dbReference type="InterPro" id="IPR036925">
    <property type="entry name" value="TIF_IF2_dom3_sf"/>
</dbReference>
<dbReference type="InterPro" id="IPR009000">
    <property type="entry name" value="Transl_B-barrel_sf"/>
</dbReference>
<dbReference type="NCBIfam" id="TIGR00487">
    <property type="entry name" value="IF-2"/>
    <property type="match status" value="1"/>
</dbReference>
<dbReference type="NCBIfam" id="TIGR00231">
    <property type="entry name" value="small_GTP"/>
    <property type="match status" value="1"/>
</dbReference>
<dbReference type="PANTHER" id="PTHR43381:SF5">
    <property type="entry name" value="TR-TYPE G DOMAIN-CONTAINING PROTEIN"/>
    <property type="match status" value="1"/>
</dbReference>
<dbReference type="PANTHER" id="PTHR43381">
    <property type="entry name" value="TRANSLATION INITIATION FACTOR IF-2-RELATED"/>
    <property type="match status" value="1"/>
</dbReference>
<dbReference type="Pfam" id="PF22042">
    <property type="entry name" value="EF-G_D2"/>
    <property type="match status" value="1"/>
</dbReference>
<dbReference type="Pfam" id="PF00009">
    <property type="entry name" value="GTP_EFTU"/>
    <property type="match status" value="1"/>
</dbReference>
<dbReference type="Pfam" id="PF03144">
    <property type="entry name" value="GTP_EFTU_D2"/>
    <property type="match status" value="1"/>
</dbReference>
<dbReference type="Pfam" id="PF11987">
    <property type="entry name" value="IF-2"/>
    <property type="match status" value="1"/>
</dbReference>
<dbReference type="Pfam" id="PF08364">
    <property type="entry name" value="IF2_assoc"/>
    <property type="match status" value="1"/>
</dbReference>
<dbReference type="Pfam" id="PF04760">
    <property type="entry name" value="IF2_N"/>
    <property type="match status" value="2"/>
</dbReference>
<dbReference type="SUPFAM" id="SSF52156">
    <property type="entry name" value="Initiation factor IF2/eIF5b, domain 3"/>
    <property type="match status" value="1"/>
</dbReference>
<dbReference type="SUPFAM" id="SSF52540">
    <property type="entry name" value="P-loop containing nucleoside triphosphate hydrolases"/>
    <property type="match status" value="1"/>
</dbReference>
<dbReference type="SUPFAM" id="SSF46955">
    <property type="entry name" value="Putative DNA-binding domain"/>
    <property type="match status" value="1"/>
</dbReference>
<dbReference type="SUPFAM" id="SSF50447">
    <property type="entry name" value="Translation proteins"/>
    <property type="match status" value="2"/>
</dbReference>
<dbReference type="PROSITE" id="PS51722">
    <property type="entry name" value="G_TR_2"/>
    <property type="match status" value="1"/>
</dbReference>
<dbReference type="PROSITE" id="PS01176">
    <property type="entry name" value="IF2"/>
    <property type="match status" value="1"/>
</dbReference>
<feature type="chain" id="PRO_0000228228" description="Translation initiation factor IF-2">
    <location>
        <begin position="1"/>
        <end position="886"/>
    </location>
</feature>
<feature type="domain" description="tr-type G">
    <location>
        <begin position="386"/>
        <end position="555"/>
    </location>
</feature>
<feature type="region of interest" description="Disordered" evidence="3">
    <location>
        <begin position="46"/>
        <end position="91"/>
    </location>
</feature>
<feature type="region of interest" description="Disordered" evidence="3">
    <location>
        <begin position="121"/>
        <end position="297"/>
    </location>
</feature>
<feature type="region of interest" description="G1" evidence="1">
    <location>
        <begin position="395"/>
        <end position="402"/>
    </location>
</feature>
<feature type="region of interest" description="G2" evidence="1">
    <location>
        <begin position="420"/>
        <end position="424"/>
    </location>
</feature>
<feature type="region of interest" description="G3" evidence="1">
    <location>
        <begin position="441"/>
        <end position="444"/>
    </location>
</feature>
<feature type="region of interest" description="G4" evidence="1">
    <location>
        <begin position="495"/>
        <end position="498"/>
    </location>
</feature>
<feature type="region of interest" description="G5" evidence="1">
    <location>
        <begin position="531"/>
        <end position="533"/>
    </location>
</feature>
<feature type="compositionally biased region" description="Polar residues" evidence="3">
    <location>
        <begin position="72"/>
        <end position="82"/>
    </location>
</feature>
<feature type="compositionally biased region" description="Basic and acidic residues" evidence="3">
    <location>
        <begin position="130"/>
        <end position="163"/>
    </location>
</feature>
<feature type="compositionally biased region" description="Basic and acidic residues" evidence="3">
    <location>
        <begin position="175"/>
        <end position="239"/>
    </location>
</feature>
<feature type="compositionally biased region" description="Basic and acidic residues" evidence="3">
    <location>
        <begin position="246"/>
        <end position="260"/>
    </location>
</feature>
<feature type="binding site" evidence="2">
    <location>
        <begin position="395"/>
        <end position="402"/>
    </location>
    <ligand>
        <name>GTP</name>
        <dbReference type="ChEBI" id="CHEBI:37565"/>
    </ligand>
</feature>
<feature type="binding site" evidence="2">
    <location>
        <begin position="441"/>
        <end position="445"/>
    </location>
    <ligand>
        <name>GTP</name>
        <dbReference type="ChEBI" id="CHEBI:37565"/>
    </ligand>
</feature>
<feature type="binding site" evidence="2">
    <location>
        <begin position="495"/>
        <end position="498"/>
    </location>
    <ligand>
        <name>GTP</name>
        <dbReference type="ChEBI" id="CHEBI:37565"/>
    </ligand>
</feature>
<keyword id="KW-0963">Cytoplasm</keyword>
<keyword id="KW-0342">GTP-binding</keyword>
<keyword id="KW-0396">Initiation factor</keyword>
<keyword id="KW-0547">Nucleotide-binding</keyword>
<keyword id="KW-0648">Protein biosynthesis</keyword>
<keyword id="KW-1185">Reference proteome</keyword>
<accession>Q3IJ53</accession>
<organism>
    <name type="scientific">Pseudoalteromonas translucida (strain TAC 125)</name>
    <dbReference type="NCBI Taxonomy" id="326442"/>
    <lineage>
        <taxon>Bacteria</taxon>
        <taxon>Pseudomonadati</taxon>
        <taxon>Pseudomonadota</taxon>
        <taxon>Gammaproteobacteria</taxon>
        <taxon>Alteromonadales</taxon>
        <taxon>Pseudoalteromonadaceae</taxon>
        <taxon>Pseudoalteromonas</taxon>
    </lineage>
</organism>
<evidence type="ECO:0000250" key="1"/>
<evidence type="ECO:0000255" key="2">
    <source>
        <dbReference type="HAMAP-Rule" id="MF_00100"/>
    </source>
</evidence>
<evidence type="ECO:0000256" key="3">
    <source>
        <dbReference type="SAM" id="MobiDB-lite"/>
    </source>
</evidence>